<sequence>MDYFTLFGLPARYLIDGNQLTTRYQELQRQFHPDRFATQPERERLASMQQAATINDAYQTLKHPLKRAEYMLSLQGFDLGNEQHTMRDTAFLMEQLELREELDAIERKPDAETLLAEFSRRVAQMTTTRTQQMVEQLDAQLWVQAADTVRKLRFLDKLQQQVEQLEERLFDDFA</sequence>
<evidence type="ECO:0000255" key="1">
    <source>
        <dbReference type="HAMAP-Rule" id="MF_00682"/>
    </source>
</evidence>
<name>HSCB_YERPN</name>
<comment type="function">
    <text evidence="1">Co-chaperone involved in the maturation of iron-sulfur cluster-containing proteins. Seems to help targeting proteins to be folded toward HscA.</text>
</comment>
<comment type="subunit">
    <text evidence="1">Interacts with HscA and stimulates its ATPase activity. Interacts with IscU.</text>
</comment>
<comment type="similarity">
    <text evidence="1">Belongs to the HscB family.</text>
</comment>
<feature type="chain" id="PRO_1000083056" description="Co-chaperone protein HscB">
    <location>
        <begin position="1"/>
        <end position="174"/>
    </location>
</feature>
<feature type="domain" description="J" evidence="1">
    <location>
        <begin position="2"/>
        <end position="74"/>
    </location>
</feature>
<reference key="1">
    <citation type="journal article" date="2006" name="J. Bacteriol.">
        <title>Complete genome sequence of Yersinia pestis strains Antiqua and Nepal516: evidence of gene reduction in an emerging pathogen.</title>
        <authorList>
            <person name="Chain P.S.G."/>
            <person name="Hu P."/>
            <person name="Malfatti S.A."/>
            <person name="Radnedge L."/>
            <person name="Larimer F."/>
            <person name="Vergez L.M."/>
            <person name="Worsham P."/>
            <person name="Chu M.C."/>
            <person name="Andersen G.L."/>
        </authorList>
    </citation>
    <scope>NUCLEOTIDE SEQUENCE [LARGE SCALE GENOMIC DNA]</scope>
    <source>
        <strain>Nepal516</strain>
    </source>
</reference>
<reference key="2">
    <citation type="submission" date="2009-04" db="EMBL/GenBank/DDBJ databases">
        <title>Yersinia pestis Nepal516A whole genome shotgun sequencing project.</title>
        <authorList>
            <person name="Plunkett G. III"/>
            <person name="Anderson B.D."/>
            <person name="Baumler D.J."/>
            <person name="Burland V."/>
            <person name="Cabot E.L."/>
            <person name="Glasner J.D."/>
            <person name="Mau B."/>
            <person name="Neeno-Eckwall E."/>
            <person name="Perna N.T."/>
            <person name="Munk A.C."/>
            <person name="Tapia R."/>
            <person name="Green L.D."/>
            <person name="Rogers Y.C."/>
            <person name="Detter J.C."/>
            <person name="Bruce D.C."/>
            <person name="Brettin T.S."/>
        </authorList>
    </citation>
    <scope>NUCLEOTIDE SEQUENCE [LARGE SCALE GENOMIC DNA]</scope>
    <source>
        <strain>Nepal516</strain>
    </source>
</reference>
<gene>
    <name evidence="1" type="primary">hscB</name>
    <name type="ordered locus">YPN_1244</name>
    <name type="ORF">YP516_1364</name>
</gene>
<organism>
    <name type="scientific">Yersinia pestis bv. Antiqua (strain Nepal516)</name>
    <dbReference type="NCBI Taxonomy" id="377628"/>
    <lineage>
        <taxon>Bacteria</taxon>
        <taxon>Pseudomonadati</taxon>
        <taxon>Pseudomonadota</taxon>
        <taxon>Gammaproteobacteria</taxon>
        <taxon>Enterobacterales</taxon>
        <taxon>Yersiniaceae</taxon>
        <taxon>Yersinia</taxon>
    </lineage>
</organism>
<accession>Q1CKA6</accession>
<accession>C4GRJ3</accession>
<proteinExistence type="inferred from homology"/>
<keyword id="KW-0143">Chaperone</keyword>
<dbReference type="EMBL" id="CP000305">
    <property type="protein sequence ID" value="ABG17574.1"/>
    <property type="molecule type" value="Genomic_DNA"/>
</dbReference>
<dbReference type="EMBL" id="ACNQ01000008">
    <property type="protein sequence ID" value="EEO77684.1"/>
    <property type="molecule type" value="Genomic_DNA"/>
</dbReference>
<dbReference type="RefSeq" id="WP_002209833.1">
    <property type="nucleotide sequence ID" value="NZ_ACNQ01000008.1"/>
</dbReference>
<dbReference type="SMR" id="Q1CKA6"/>
<dbReference type="GeneID" id="57975850"/>
<dbReference type="KEGG" id="ypn:YPN_1244"/>
<dbReference type="HOGENOM" id="CLU_068529_2_0_6"/>
<dbReference type="Proteomes" id="UP000008936">
    <property type="component" value="Chromosome"/>
</dbReference>
<dbReference type="GO" id="GO:1990230">
    <property type="term" value="C:iron-sulfur cluster transfer complex"/>
    <property type="evidence" value="ECO:0007669"/>
    <property type="project" value="TreeGrafter"/>
</dbReference>
<dbReference type="GO" id="GO:0001671">
    <property type="term" value="F:ATPase activator activity"/>
    <property type="evidence" value="ECO:0007669"/>
    <property type="project" value="InterPro"/>
</dbReference>
<dbReference type="GO" id="GO:0051087">
    <property type="term" value="F:protein-folding chaperone binding"/>
    <property type="evidence" value="ECO:0007669"/>
    <property type="project" value="InterPro"/>
</dbReference>
<dbReference type="GO" id="GO:0044571">
    <property type="term" value="P:[2Fe-2S] cluster assembly"/>
    <property type="evidence" value="ECO:0007669"/>
    <property type="project" value="InterPro"/>
</dbReference>
<dbReference type="GO" id="GO:0051259">
    <property type="term" value="P:protein complex oligomerization"/>
    <property type="evidence" value="ECO:0007669"/>
    <property type="project" value="InterPro"/>
</dbReference>
<dbReference type="GO" id="GO:0006457">
    <property type="term" value="P:protein folding"/>
    <property type="evidence" value="ECO:0007669"/>
    <property type="project" value="UniProtKB-UniRule"/>
</dbReference>
<dbReference type="CDD" id="cd06257">
    <property type="entry name" value="DnaJ"/>
    <property type="match status" value="1"/>
</dbReference>
<dbReference type="FunFam" id="1.10.287.110:FF:000008">
    <property type="entry name" value="Co-chaperone protein HscB"/>
    <property type="match status" value="1"/>
</dbReference>
<dbReference type="Gene3D" id="1.10.287.110">
    <property type="entry name" value="DnaJ domain"/>
    <property type="match status" value="1"/>
</dbReference>
<dbReference type="Gene3D" id="1.20.1280.20">
    <property type="entry name" value="HscB, C-terminal domain"/>
    <property type="match status" value="1"/>
</dbReference>
<dbReference type="HAMAP" id="MF_00682">
    <property type="entry name" value="HscB"/>
    <property type="match status" value="1"/>
</dbReference>
<dbReference type="InterPro" id="IPR001623">
    <property type="entry name" value="DnaJ_domain"/>
</dbReference>
<dbReference type="InterPro" id="IPR004640">
    <property type="entry name" value="HscB"/>
</dbReference>
<dbReference type="InterPro" id="IPR036386">
    <property type="entry name" value="HscB_C_sf"/>
</dbReference>
<dbReference type="InterPro" id="IPR009073">
    <property type="entry name" value="HscB_oligo_C"/>
</dbReference>
<dbReference type="InterPro" id="IPR036869">
    <property type="entry name" value="J_dom_sf"/>
</dbReference>
<dbReference type="NCBIfam" id="TIGR00714">
    <property type="entry name" value="hscB"/>
    <property type="match status" value="1"/>
</dbReference>
<dbReference type="NCBIfam" id="NF003449">
    <property type="entry name" value="PRK05014.1"/>
    <property type="match status" value="1"/>
</dbReference>
<dbReference type="PANTHER" id="PTHR14021">
    <property type="entry name" value="IRON-SULFUR CLUSTER CO-CHAPERONE PROTEIN HSCB"/>
    <property type="match status" value="1"/>
</dbReference>
<dbReference type="PANTHER" id="PTHR14021:SF15">
    <property type="entry name" value="IRON-SULFUR CLUSTER CO-CHAPERONE PROTEIN HSCB"/>
    <property type="match status" value="1"/>
</dbReference>
<dbReference type="Pfam" id="PF00226">
    <property type="entry name" value="DnaJ"/>
    <property type="match status" value="1"/>
</dbReference>
<dbReference type="Pfam" id="PF07743">
    <property type="entry name" value="HSCB_C"/>
    <property type="match status" value="1"/>
</dbReference>
<dbReference type="SMART" id="SM00271">
    <property type="entry name" value="DnaJ"/>
    <property type="match status" value="1"/>
</dbReference>
<dbReference type="SUPFAM" id="SSF46565">
    <property type="entry name" value="Chaperone J-domain"/>
    <property type="match status" value="1"/>
</dbReference>
<dbReference type="SUPFAM" id="SSF47144">
    <property type="entry name" value="HSC20 (HSCB), C-terminal oligomerisation domain"/>
    <property type="match status" value="1"/>
</dbReference>
<dbReference type="PROSITE" id="PS50076">
    <property type="entry name" value="DNAJ_2"/>
    <property type="match status" value="1"/>
</dbReference>
<protein>
    <recommendedName>
        <fullName evidence="1">Co-chaperone protein HscB</fullName>
    </recommendedName>
    <alternativeName>
        <fullName evidence="1">Hsc20</fullName>
    </alternativeName>
</protein>